<evidence type="ECO:0000250" key="1">
    <source>
        <dbReference type="UniProtKB" id="E1C7U0"/>
    </source>
</evidence>
<evidence type="ECO:0000250" key="2">
    <source>
        <dbReference type="UniProtKB" id="Q86WV6"/>
    </source>
</evidence>
<evidence type="ECO:0000255" key="3"/>
<evidence type="ECO:0000269" key="4">
    <source>
    </source>
</evidence>
<evidence type="ECO:0000269" key="5">
    <source>
    </source>
</evidence>
<evidence type="ECO:0000303" key="6">
    <source>
    </source>
</evidence>
<evidence type="ECO:0000305" key="7"/>
<feature type="chain" id="PRO_0000355181" description="Stimulator of interferon genes protein">
    <location>
        <begin position="1"/>
        <end position="329"/>
    </location>
</feature>
<feature type="topological domain" description="Cytoplasmic" evidence="7">
    <location>
        <begin position="1"/>
        <end position="4"/>
    </location>
</feature>
<feature type="transmembrane region" description="Helical; Name=1" evidence="3">
    <location>
        <begin position="5"/>
        <end position="25"/>
    </location>
</feature>
<feature type="topological domain" description="Lumenal" evidence="7">
    <location>
        <position position="26"/>
    </location>
</feature>
<feature type="transmembrane region" description="Helical; Name=2" evidence="3">
    <location>
        <begin position="27"/>
        <end position="52"/>
    </location>
</feature>
<feature type="topological domain" description="Cytoplasmic" evidence="7">
    <location>
        <begin position="53"/>
        <end position="74"/>
    </location>
</feature>
<feature type="transmembrane region" description="Helical; Name=3" evidence="3">
    <location>
        <begin position="75"/>
        <end position="88"/>
    </location>
</feature>
<feature type="topological domain" description="Lumenal" evidence="7">
    <location>
        <begin position="89"/>
        <end position="98"/>
    </location>
</feature>
<feature type="transmembrane region" description="Helical; Name=4" evidence="3">
    <location>
        <begin position="99"/>
        <end position="116"/>
    </location>
</feature>
<feature type="topological domain" description="Cytoplasmic" evidence="7">
    <location>
        <begin position="117"/>
        <end position="329"/>
    </location>
</feature>
<feature type="region of interest" description="Cyclic dinucleotide-binding domain (CBD)" evidence="2">
    <location>
        <begin position="135"/>
        <end position="325"/>
    </location>
</feature>
<feature type="binding site" evidence="2">
    <location>
        <position position="144"/>
    </location>
    <ligand>
        <name>2',3'-cGAMP</name>
        <dbReference type="ChEBI" id="CHEBI:143093"/>
    </ligand>
</feature>
<feature type="binding site" evidence="2">
    <location>
        <position position="144"/>
    </location>
    <ligand>
        <name>3',3'-c-di-GMP</name>
        <dbReference type="ChEBI" id="CHEBI:58805"/>
    </ligand>
</feature>
<feature type="binding site" evidence="2">
    <location>
        <position position="149"/>
    </location>
    <ligand>
        <name>2',3'-cGAMP</name>
        <dbReference type="ChEBI" id="CHEBI:143093"/>
    </ligand>
</feature>
<feature type="binding site" evidence="2">
    <location>
        <position position="149"/>
    </location>
    <ligand>
        <name>3',3'-c-di-GMP</name>
        <dbReference type="ChEBI" id="CHEBI:58805"/>
    </ligand>
</feature>
<feature type="binding site" evidence="2">
    <location>
        <begin position="220"/>
        <end position="223"/>
    </location>
    <ligand>
        <name>3',3'-c-di-GMP</name>
        <dbReference type="ChEBI" id="CHEBI:58805"/>
    </ligand>
</feature>
<feature type="binding site" evidence="2">
    <location>
        <position position="220"/>
    </location>
    <ligand>
        <name>2',3'-cGAMP</name>
        <dbReference type="ChEBI" id="CHEBI:143093"/>
    </ligand>
</feature>
<feature type="binding site" evidence="2">
    <location>
        <position position="245"/>
    </location>
    <ligand>
        <name>2',3'-cGAMP</name>
        <dbReference type="ChEBI" id="CHEBI:143093"/>
    </ligand>
</feature>
<feature type="binding site" evidence="2">
    <location>
        <position position="245"/>
    </location>
    <ligand>
        <name>3',3'-c-di-GMP</name>
        <dbReference type="ChEBI" id="CHEBI:58805"/>
    </ligand>
</feature>
<protein>
    <recommendedName>
        <fullName evidence="6">Stimulator of interferon genes protein</fullName>
        <shortName evidence="6">STING</shortName>
    </recommendedName>
    <alternativeName>
        <fullName evidence="7">Transmembrane protein 173</fullName>
    </alternativeName>
</protein>
<keyword id="KW-0072">Autophagy</keyword>
<keyword id="KW-0963">Cytoplasm</keyword>
<keyword id="KW-0968">Cytoplasmic vesicle</keyword>
<keyword id="KW-0256">Endoplasmic reticulum</keyword>
<keyword id="KW-0333">Golgi apparatus</keyword>
<keyword id="KW-0391">Immunity</keyword>
<keyword id="KW-0399">Innate immunity</keyword>
<keyword id="KW-0407">Ion channel</keyword>
<keyword id="KW-0406">Ion transport</keyword>
<keyword id="KW-0472">Membrane</keyword>
<keyword id="KW-0547">Nucleotide-binding</keyword>
<keyword id="KW-1185">Reference proteome</keyword>
<keyword id="KW-0812">Transmembrane</keyword>
<keyword id="KW-1133">Transmembrane helix</keyword>
<keyword id="KW-0813">Transport</keyword>
<sequence>MACVLAIGSILFVWILGKGKYSGAQLIYRMATNFAISQGCCLVTCACELTEEIKHLHTRYNGHYWRALKASFNLSCAAFVTAILCYVFYEPKLMASLPLTIDITLTLLSWLFCWILGIQGPTPATISEITEIKQLNVAHGLAWSYYVGYLQFVLPALKESIQKFNEENHNLLKFPETCRLHILIPLSCRLYGDLKDVDENITFLKEIPPLYIDRAGIKGRVFKNNVYRILDEDGRPYNCIVEYATPLASLLKMTDIPSAAFSADDRLQQTKLFYRTLKDILENAHELQNTYRLIVYEDFPETKDHSRHLLSQEILKHIRQQHSEEYSML</sequence>
<dbReference type="EMBL" id="BC153736">
    <property type="protein sequence ID" value="AAI53737.1"/>
    <property type="molecule type" value="mRNA"/>
</dbReference>
<dbReference type="RefSeq" id="NP_001106445.2">
    <property type="nucleotide sequence ID" value="NM_001112974.1"/>
</dbReference>
<dbReference type="SMR" id="A8E5V9"/>
<dbReference type="FunCoup" id="A8E5V9">
    <property type="interactions" value="359"/>
</dbReference>
<dbReference type="STRING" id="8364.ENSXETP00000018513"/>
<dbReference type="PaxDb" id="8364-ENSXETP00000055434"/>
<dbReference type="DNASU" id="100127621"/>
<dbReference type="GeneID" id="100127621"/>
<dbReference type="KEGG" id="xtr:100127621"/>
<dbReference type="CTD" id="340061"/>
<dbReference type="eggNOG" id="ENOG502R15M">
    <property type="taxonomic scope" value="Eukaryota"/>
</dbReference>
<dbReference type="InParanoid" id="A8E5V9"/>
<dbReference type="OrthoDB" id="6053839at2759"/>
<dbReference type="Reactome" id="R-XTR-1834941">
    <property type="pathway name" value="STING mediated induction of host immune responses"/>
</dbReference>
<dbReference type="Reactome" id="R-XTR-3249367">
    <property type="pathway name" value="STAT6-mediated induction of chemokines"/>
</dbReference>
<dbReference type="Reactome" id="R-XTR-6798695">
    <property type="pathway name" value="Neutrophil degranulation"/>
</dbReference>
<dbReference type="Proteomes" id="UP000008143">
    <property type="component" value="Chromosome 3"/>
</dbReference>
<dbReference type="GO" id="GO:0000421">
    <property type="term" value="C:autophagosome membrane"/>
    <property type="evidence" value="ECO:0007669"/>
    <property type="project" value="UniProtKB-SubCell"/>
</dbReference>
<dbReference type="GO" id="GO:0005737">
    <property type="term" value="C:cytoplasm"/>
    <property type="evidence" value="ECO:0000250"/>
    <property type="project" value="UniProtKB"/>
</dbReference>
<dbReference type="GO" id="GO:0031410">
    <property type="term" value="C:cytoplasmic vesicle"/>
    <property type="evidence" value="ECO:0007669"/>
    <property type="project" value="UniProtKB-KW"/>
</dbReference>
<dbReference type="GO" id="GO:0005789">
    <property type="term" value="C:endoplasmic reticulum membrane"/>
    <property type="evidence" value="ECO:0000250"/>
    <property type="project" value="UniProtKB"/>
</dbReference>
<dbReference type="GO" id="GO:0033116">
    <property type="term" value="C:endoplasmic reticulum-Golgi intermediate compartment membrane"/>
    <property type="evidence" value="ECO:0007669"/>
    <property type="project" value="UniProtKB-SubCell"/>
</dbReference>
<dbReference type="GO" id="GO:0000139">
    <property type="term" value="C:Golgi membrane"/>
    <property type="evidence" value="ECO:0007669"/>
    <property type="project" value="UniProtKB-SubCell"/>
</dbReference>
<dbReference type="GO" id="GO:0048471">
    <property type="term" value="C:perinuclear region of cytoplasm"/>
    <property type="evidence" value="ECO:0000250"/>
    <property type="project" value="UniProtKB"/>
</dbReference>
<dbReference type="GO" id="GO:0061507">
    <property type="term" value="F:2',3'-cyclic GMP-AMP binding"/>
    <property type="evidence" value="ECO:0000314"/>
    <property type="project" value="UniProtKB"/>
</dbReference>
<dbReference type="GO" id="GO:0035438">
    <property type="term" value="F:cyclic-di-GMP binding"/>
    <property type="evidence" value="ECO:0000250"/>
    <property type="project" value="UniProtKB"/>
</dbReference>
<dbReference type="GO" id="GO:0042803">
    <property type="term" value="F:protein homodimerization activity"/>
    <property type="evidence" value="ECO:0000250"/>
    <property type="project" value="UniProtKB"/>
</dbReference>
<dbReference type="GO" id="GO:0015252">
    <property type="term" value="F:proton channel activity"/>
    <property type="evidence" value="ECO:0000250"/>
    <property type="project" value="UniProtKB"/>
</dbReference>
<dbReference type="GO" id="GO:0002218">
    <property type="term" value="P:activation of innate immune response"/>
    <property type="evidence" value="ECO:0000250"/>
    <property type="project" value="UniProtKB"/>
</dbReference>
<dbReference type="GO" id="GO:0000045">
    <property type="term" value="P:autophagosome assembly"/>
    <property type="evidence" value="ECO:0000250"/>
    <property type="project" value="UniProtKB"/>
</dbReference>
<dbReference type="GO" id="GO:0140896">
    <property type="term" value="P:cGAS/STING signaling pathway"/>
    <property type="evidence" value="ECO:0000250"/>
    <property type="project" value="UniProtKB"/>
</dbReference>
<dbReference type="GO" id="GO:0051607">
    <property type="term" value="P:defense response to virus"/>
    <property type="evidence" value="ECO:0000250"/>
    <property type="project" value="UniProtKB"/>
</dbReference>
<dbReference type="GO" id="GO:0045087">
    <property type="term" value="P:innate immune response"/>
    <property type="evidence" value="ECO:0000250"/>
    <property type="project" value="UniProtKB"/>
</dbReference>
<dbReference type="GO" id="GO:0032728">
    <property type="term" value="P:positive regulation of interferon-beta production"/>
    <property type="evidence" value="ECO:0000250"/>
    <property type="project" value="UniProtKB"/>
</dbReference>
<dbReference type="GO" id="GO:0016239">
    <property type="term" value="P:positive regulation of macroautophagy"/>
    <property type="evidence" value="ECO:0000314"/>
    <property type="project" value="UniProtKB"/>
</dbReference>
<dbReference type="GO" id="GO:0032481">
    <property type="term" value="P:positive regulation of type I interferon production"/>
    <property type="evidence" value="ECO:0000250"/>
    <property type="project" value="UniProtKB"/>
</dbReference>
<dbReference type="GO" id="GO:0061709">
    <property type="term" value="P:reticulophagy"/>
    <property type="evidence" value="ECO:0000250"/>
    <property type="project" value="UniProtKB"/>
</dbReference>
<dbReference type="CDD" id="cd22658">
    <property type="entry name" value="STING_C_metazoan-like"/>
    <property type="match status" value="1"/>
</dbReference>
<dbReference type="FunFam" id="1.20.5.5200:FF:000001">
    <property type="entry name" value="Stimulator of interferon genes protein"/>
    <property type="match status" value="1"/>
</dbReference>
<dbReference type="FunFam" id="3.40.50.12100:FF:000003">
    <property type="entry name" value="Stimulator of interferon genes protein"/>
    <property type="match status" value="1"/>
</dbReference>
<dbReference type="Gene3D" id="1.20.5.5200">
    <property type="match status" value="1"/>
</dbReference>
<dbReference type="Gene3D" id="3.40.50.12100">
    <property type="entry name" value="Stimulator of interferon genes protein"/>
    <property type="match status" value="1"/>
</dbReference>
<dbReference type="InterPro" id="IPR029158">
    <property type="entry name" value="STING"/>
</dbReference>
<dbReference type="InterPro" id="IPR047191">
    <property type="entry name" value="STING_C_chordates"/>
</dbReference>
<dbReference type="InterPro" id="IPR038623">
    <property type="entry name" value="STING_C_sf"/>
</dbReference>
<dbReference type="InterPro" id="IPR055432">
    <property type="entry name" value="STING_LBD"/>
</dbReference>
<dbReference type="InterPro" id="IPR055434">
    <property type="entry name" value="STING_TM"/>
</dbReference>
<dbReference type="PANTHER" id="PTHR34339">
    <property type="entry name" value="STIMULATOR OF INTERFERON GENES PROTEIN"/>
    <property type="match status" value="1"/>
</dbReference>
<dbReference type="PANTHER" id="PTHR34339:SF1">
    <property type="entry name" value="STIMULATOR OF INTERFERON GENES PROTEIN"/>
    <property type="match status" value="1"/>
</dbReference>
<dbReference type="Pfam" id="PF15009">
    <property type="entry name" value="STING_LBD"/>
    <property type="match status" value="1"/>
</dbReference>
<dbReference type="Pfam" id="PF23417">
    <property type="entry name" value="STING_TM"/>
    <property type="match status" value="1"/>
</dbReference>
<proteinExistence type="evidence at transcript level"/>
<organism>
    <name type="scientific">Xenopus tropicalis</name>
    <name type="common">Western clawed frog</name>
    <name type="synonym">Silurana tropicalis</name>
    <dbReference type="NCBI Taxonomy" id="8364"/>
    <lineage>
        <taxon>Eukaryota</taxon>
        <taxon>Metazoa</taxon>
        <taxon>Chordata</taxon>
        <taxon>Craniata</taxon>
        <taxon>Vertebrata</taxon>
        <taxon>Euteleostomi</taxon>
        <taxon>Amphibia</taxon>
        <taxon>Batrachia</taxon>
        <taxon>Anura</taxon>
        <taxon>Pipoidea</taxon>
        <taxon>Pipidae</taxon>
        <taxon>Xenopodinae</taxon>
        <taxon>Xenopus</taxon>
        <taxon>Silurana</taxon>
    </lineage>
</organism>
<gene>
    <name evidence="2" type="primary">sting1</name>
    <name evidence="6" type="synonym">sting</name>
    <name evidence="2" type="synonym">tmem173</name>
</gene>
<accession>A8E5V9</accession>
<reference key="1">
    <citation type="submission" date="2007-09" db="EMBL/GenBank/DDBJ databases">
        <authorList>
            <consortium name="NIH - Xenopus Gene Collection (XGC) project"/>
        </authorList>
    </citation>
    <scope>NUCLEOTIDE SEQUENCE [LARGE SCALE MRNA]</scope>
    <source>
        <tissue>Thymus</tissue>
    </source>
</reference>
<reference key="2">
    <citation type="journal article" date="2015" name="Mol. Cell">
        <title>Ancient origin of cGAS-STING reveals mechanism of universal 2',3' cGAMP signaling.</title>
        <authorList>
            <person name="Kranzusch P.J."/>
            <person name="Wilson S.C."/>
            <person name="Lee A.S."/>
            <person name="Berger J.M."/>
            <person name="Doudna J.A."/>
            <person name="Vance R.E."/>
        </authorList>
    </citation>
    <scope>FUNCTION</scope>
</reference>
<reference key="3">
    <citation type="journal article" date="2019" name="Nature">
        <title>Autophagy induction via STING trafficking is a primordial function of the cGAS pathway.</title>
        <authorList>
            <person name="Gui X."/>
            <person name="Yang H."/>
            <person name="Li T."/>
            <person name="Tan X."/>
            <person name="Shi P."/>
            <person name="Li M."/>
            <person name="Du F."/>
            <person name="Chen Z.J."/>
        </authorList>
    </citation>
    <scope>FUNCTION</scope>
    <scope>SUBCELLULAR LOCATION</scope>
</reference>
<name>STING_XENTR</name>
<comment type="function">
    <text evidence="2 4 5">Sensor of cytosolic DNA from bacteria and viruses that promotes autophagy (PubMed:26300263, PubMed:30842662). Acts by recognizing and binding cyclic GMP-AMP (cGAMP), a messenger produced by CGAS in response to DNA in the cytosol (PubMed:26300263, PubMed:30842662). Exhibits guanine base-specific ligand recognition: binds 3'-3'linked cGAMP, 2'-3' linked cGAMP and 3'-3' linked c-di-GMP with much greater affinity as compared to 3'-3' linked c-di-AMP (PubMed:26300263). Following cGAMP-binding, promotes the formation of autophagosomes, leading to target cytosolic DNA for degradation by the lysosome (PubMed:30842662). Promotes autophagy by acting as a proton channel that directs proton efflux from the Golgi to facilitate LC3 lipidation (By similarity). Lacks the C-terminal tail (CTT) found in other vertebrate orthologs which is essential for interferon signaling (PubMed:26300263).</text>
</comment>
<comment type="catalytic activity">
    <reaction evidence="2">
        <text>H(+)(in) = H(+)(out)</text>
        <dbReference type="Rhea" id="RHEA:34979"/>
        <dbReference type="ChEBI" id="CHEBI:15378"/>
    </reaction>
</comment>
<comment type="subunit">
    <text evidence="1">Homodimer; forms a homodimer in absence of cyclic nucleotide (c-di-GMP or cGAMP). Homotetramer; in presence of cyclic nucleotide (c-di-GMP or cGAMP), forms tetramers and higher-order oligomers through side-by-side packing.</text>
</comment>
<comment type="subcellular location">
    <subcellularLocation>
        <location evidence="5">Endoplasmic reticulum membrane</location>
        <topology evidence="3">Multi-pass membrane protein</topology>
    </subcellularLocation>
    <subcellularLocation>
        <location evidence="2">Cytoplasm</location>
        <location evidence="2">Perinuclear region</location>
    </subcellularLocation>
    <subcellularLocation>
        <location evidence="2">Endoplasmic reticulum-Golgi intermediate compartment membrane</location>
        <topology evidence="3">Multi-pass membrane protein</topology>
    </subcellularLocation>
    <subcellularLocation>
        <location evidence="2">Golgi apparatus membrane</location>
        <topology evidence="3">Multi-pass membrane protein</topology>
    </subcellularLocation>
    <subcellularLocation>
        <location evidence="2">Cytoplasmic vesicle</location>
        <location evidence="2">Autophagosome membrane</location>
        <topology evidence="3">Multi-pass membrane protein</topology>
    </subcellularLocation>
    <text evidence="2 5">In response to double-stranded DNA stimulation, translocates from the endoplasmic reticulum through the endoplasmic reticulum-Golgi intermediate compartment and Golgi to post-Golgi vesicles, where the kinase tbk1 is recruited (PubMed:30842662). Upon cGAMP-binding, translocates to the endoplasmic reticulum-Golgi intermediate compartment (ERGIC) in a process that is dependent on COPII vesicles; STING1-containing ERGIC serves as a membrane source for LC3 lipidation, which is a key step in autophagosome biogenesis (By similarity).</text>
</comment>
<comment type="domain">
    <text evidence="1 2">In absence of cGAMP, the transmembrane and cytoplasmic regions interact to form an integrated, domain-swapped dimeric assembly (By similarity). In absence of cyclic nucleotide (c-di-GMP or cGAMP), the protein is autoinhibited by an intramolecular interaction between the cyclic dinucleotide-binding domain (CBD) and the C-terminal tail (CTT) (By similarity). Following cGAMP-binding, the cyclic dinucleotide-binding domain (CBD) is closed, leading to a 180 degrees rotation of the CBD domain relative to the transmembrane domain. This rotation is coupled to a conformational change in a loop on the side of the CBD dimer, which leads to the formation of the STING1 tetramer and higher-order oligomers through side-by-side packing (By similarity).</text>
</comment>
<comment type="domain">
    <text evidence="2">The N-terminal domain interacts with glycerophospholipids and phospholipids.</text>
</comment>
<comment type="similarity">
    <text evidence="7">Belongs to the STING family.</text>
</comment>